<organism>
    <name type="scientific">Dictyostelium discoideum</name>
    <name type="common">Social amoeba</name>
    <dbReference type="NCBI Taxonomy" id="44689"/>
    <lineage>
        <taxon>Eukaryota</taxon>
        <taxon>Amoebozoa</taxon>
        <taxon>Evosea</taxon>
        <taxon>Eumycetozoa</taxon>
        <taxon>Dictyostelia</taxon>
        <taxon>Dictyosteliales</taxon>
        <taxon>Dictyosteliaceae</taxon>
        <taxon>Dictyostelium</taxon>
    </lineage>
</organism>
<protein>
    <recommendedName>
        <fullName>Dolichol phosphate-mannose biosynthesis regulatory protein</fullName>
    </recommendedName>
    <alternativeName>
        <fullName>Dolichol-phosphate mannose synthase subunit 2</fullName>
        <shortName>DPM synthase subunit 2</shortName>
    </alternativeName>
</protein>
<accession>Q556K9</accession>
<accession>Q86K00</accession>
<reference key="1">
    <citation type="journal article" date="2002" name="Nature">
        <title>Sequence and analysis of chromosome 2 of Dictyostelium discoideum.</title>
        <authorList>
            <person name="Gloeckner G."/>
            <person name="Eichinger L."/>
            <person name="Szafranski K."/>
            <person name="Pachebat J.A."/>
            <person name="Bankier A.T."/>
            <person name="Dear P.H."/>
            <person name="Lehmann R."/>
            <person name="Baumgart C."/>
            <person name="Parra G."/>
            <person name="Abril J.F."/>
            <person name="Guigo R."/>
            <person name="Kumpf K."/>
            <person name="Tunggal B."/>
            <person name="Cox E.C."/>
            <person name="Quail M.A."/>
            <person name="Platzer M."/>
            <person name="Rosenthal A."/>
            <person name="Noegel A.A."/>
        </authorList>
    </citation>
    <scope>NUCLEOTIDE SEQUENCE [LARGE SCALE GENOMIC DNA]</scope>
    <source>
        <strain>AX4</strain>
    </source>
</reference>
<reference key="2">
    <citation type="journal article" date="2005" name="Nature">
        <title>The genome of the social amoeba Dictyostelium discoideum.</title>
        <authorList>
            <person name="Eichinger L."/>
            <person name="Pachebat J.A."/>
            <person name="Gloeckner G."/>
            <person name="Rajandream M.A."/>
            <person name="Sucgang R."/>
            <person name="Berriman M."/>
            <person name="Song J."/>
            <person name="Olsen R."/>
            <person name="Szafranski K."/>
            <person name="Xu Q."/>
            <person name="Tunggal B."/>
            <person name="Kummerfeld S."/>
            <person name="Madera M."/>
            <person name="Konfortov B.A."/>
            <person name="Rivero F."/>
            <person name="Bankier A.T."/>
            <person name="Lehmann R."/>
            <person name="Hamlin N."/>
            <person name="Davies R."/>
            <person name="Gaudet P."/>
            <person name="Fey P."/>
            <person name="Pilcher K."/>
            <person name="Chen G."/>
            <person name="Saunders D."/>
            <person name="Sodergren E.J."/>
            <person name="Davis P."/>
            <person name="Kerhornou A."/>
            <person name="Nie X."/>
            <person name="Hall N."/>
            <person name="Anjard C."/>
            <person name="Hemphill L."/>
            <person name="Bason N."/>
            <person name="Farbrother P."/>
            <person name="Desany B."/>
            <person name="Just E."/>
            <person name="Morio T."/>
            <person name="Rost R."/>
            <person name="Churcher C.M."/>
            <person name="Cooper J."/>
            <person name="Haydock S."/>
            <person name="van Driessche N."/>
            <person name="Cronin A."/>
            <person name="Goodhead I."/>
            <person name="Muzny D.M."/>
            <person name="Mourier T."/>
            <person name="Pain A."/>
            <person name="Lu M."/>
            <person name="Harper D."/>
            <person name="Lindsay R."/>
            <person name="Hauser H."/>
            <person name="James K.D."/>
            <person name="Quiles M."/>
            <person name="Madan Babu M."/>
            <person name="Saito T."/>
            <person name="Buchrieser C."/>
            <person name="Wardroper A."/>
            <person name="Felder M."/>
            <person name="Thangavelu M."/>
            <person name="Johnson D."/>
            <person name="Knights A."/>
            <person name="Loulseged H."/>
            <person name="Mungall K.L."/>
            <person name="Oliver K."/>
            <person name="Price C."/>
            <person name="Quail M.A."/>
            <person name="Urushihara H."/>
            <person name="Hernandez J."/>
            <person name="Rabbinowitsch E."/>
            <person name="Steffen D."/>
            <person name="Sanders M."/>
            <person name="Ma J."/>
            <person name="Kohara Y."/>
            <person name="Sharp S."/>
            <person name="Simmonds M.N."/>
            <person name="Spiegler S."/>
            <person name="Tivey A."/>
            <person name="Sugano S."/>
            <person name="White B."/>
            <person name="Walker D."/>
            <person name="Woodward J.R."/>
            <person name="Winckler T."/>
            <person name="Tanaka Y."/>
            <person name="Shaulsky G."/>
            <person name="Schleicher M."/>
            <person name="Weinstock G.M."/>
            <person name="Rosenthal A."/>
            <person name="Cox E.C."/>
            <person name="Chisholm R.L."/>
            <person name="Gibbs R.A."/>
            <person name="Loomis W.F."/>
            <person name="Platzer M."/>
            <person name="Kay R.R."/>
            <person name="Williams J.G."/>
            <person name="Dear P.H."/>
            <person name="Noegel A.A."/>
            <person name="Barrell B.G."/>
            <person name="Kuspa A."/>
        </authorList>
    </citation>
    <scope>NUCLEOTIDE SEQUENCE [LARGE SCALE GENOMIC DNA]</scope>
    <source>
        <strain>AX4</strain>
    </source>
</reference>
<dbReference type="EMBL" id="AAFI02000011">
    <property type="protein sequence ID" value="EAL70424.1"/>
    <property type="molecule type" value="Genomic_DNA"/>
</dbReference>
<dbReference type="EMBL" id="AAFI02000009">
    <property type="protein sequence ID" value="EAL70931.1"/>
    <property type="molecule type" value="Genomic_DNA"/>
</dbReference>
<dbReference type="RefSeq" id="XP_644349.1">
    <property type="nucleotide sequence ID" value="XM_639257.1"/>
</dbReference>
<dbReference type="RefSeq" id="XP_645065.1">
    <property type="nucleotide sequence ID" value="XM_639973.1"/>
</dbReference>
<dbReference type="FunCoup" id="Q556K9">
    <property type="interactions" value="35"/>
</dbReference>
<dbReference type="STRING" id="44689.Q556K9"/>
<dbReference type="PaxDb" id="44689-DDB0233349"/>
<dbReference type="EnsemblProtists" id="EAL70424">
    <property type="protein sequence ID" value="EAL70424"/>
    <property type="gene ID" value="DDB_G0273981"/>
</dbReference>
<dbReference type="EnsemblProtists" id="EAL70931">
    <property type="protein sequence ID" value="EAL70931"/>
    <property type="gene ID" value="DDB_G0272588"/>
</dbReference>
<dbReference type="GeneID" id="8618740"/>
<dbReference type="GeneID" id="8619236"/>
<dbReference type="KEGG" id="ddi:DDB_G0272588"/>
<dbReference type="KEGG" id="ddi:DDB_G0273981"/>
<dbReference type="dictyBase" id="DDB_G0272588">
    <property type="gene designation" value="dpm2-1"/>
</dbReference>
<dbReference type="dictyBase" id="DDB_G0273981">
    <property type="gene designation" value="dpm2-2"/>
</dbReference>
<dbReference type="VEuPathDB" id="AmoebaDB:DDB_G0273981"/>
<dbReference type="eggNOG" id="KOG3488">
    <property type="taxonomic scope" value="Eukaryota"/>
</dbReference>
<dbReference type="HOGENOM" id="CLU_150144_2_0_1"/>
<dbReference type="InParanoid" id="Q556K9"/>
<dbReference type="OMA" id="YTLWIIV"/>
<dbReference type="PhylomeDB" id="Q556K9"/>
<dbReference type="UniPathway" id="UPA00378"/>
<dbReference type="PRO" id="PR:Q556K9"/>
<dbReference type="Proteomes" id="UP000002195">
    <property type="component" value="Chromosome 2"/>
</dbReference>
<dbReference type="GO" id="GO:0033185">
    <property type="term" value="C:dolichol-phosphate-mannose synthase complex"/>
    <property type="evidence" value="ECO:0000318"/>
    <property type="project" value="GO_Central"/>
</dbReference>
<dbReference type="GO" id="GO:0005789">
    <property type="term" value="C:endoplasmic reticulum membrane"/>
    <property type="evidence" value="ECO:0007669"/>
    <property type="project" value="UniProtKB-SubCell"/>
</dbReference>
<dbReference type="GO" id="GO:0030234">
    <property type="term" value="F:enzyme regulator activity"/>
    <property type="evidence" value="ECO:0000318"/>
    <property type="project" value="GO_Central"/>
</dbReference>
<dbReference type="GO" id="GO:0180047">
    <property type="term" value="P:dolichol phosphate mannose biosynthetic process"/>
    <property type="evidence" value="ECO:0007669"/>
    <property type="project" value="InterPro"/>
</dbReference>
<dbReference type="GO" id="GO:0006506">
    <property type="term" value="P:GPI anchor biosynthetic process"/>
    <property type="evidence" value="ECO:0000318"/>
    <property type="project" value="GO_Central"/>
</dbReference>
<dbReference type="GO" id="GO:0006486">
    <property type="term" value="P:protein glycosylation"/>
    <property type="evidence" value="ECO:0007669"/>
    <property type="project" value="UniProtKB-UniPathway"/>
</dbReference>
<dbReference type="InterPro" id="IPR009914">
    <property type="entry name" value="DPM2"/>
</dbReference>
<dbReference type="PANTHER" id="PTHR15039">
    <property type="entry name" value="DOLICHOL PHOSPHATE-MANNOSE BIOSYNTHESIS REGULATORY PROTEIN"/>
    <property type="match status" value="1"/>
</dbReference>
<dbReference type="PANTHER" id="PTHR15039:SF11">
    <property type="entry name" value="DOLICHOL PHOSPHATE-MANNOSE BIOSYNTHESIS REGULATORY PROTEIN"/>
    <property type="match status" value="1"/>
</dbReference>
<dbReference type="Pfam" id="PF07297">
    <property type="entry name" value="DPM2"/>
    <property type="match status" value="1"/>
</dbReference>
<feature type="chain" id="PRO_0000347180" description="Dolichol phosphate-mannose biosynthesis regulatory protein">
    <location>
        <begin position="1"/>
        <end position="79"/>
    </location>
</feature>
<feature type="transmembrane region" description="Helical" evidence="2">
    <location>
        <begin position="8"/>
        <end position="28"/>
    </location>
</feature>
<feature type="transmembrane region" description="Helical" evidence="2">
    <location>
        <begin position="50"/>
        <end position="70"/>
    </location>
</feature>
<keyword id="KW-0256">Endoplasmic reticulum</keyword>
<keyword id="KW-0472">Membrane</keyword>
<keyword id="KW-1185">Reference proteome</keyword>
<keyword id="KW-0812">Transmembrane</keyword>
<keyword id="KW-1133">Transmembrane helix</keyword>
<proteinExistence type="inferred from homology"/>
<name>DPM2_DICDI</name>
<gene>
    <name type="primary">dpm2-1</name>
    <name type="ORF">DDB_G0272588</name>
</gene>
<gene>
    <name type="primary">dpm2-2</name>
    <name type="ORF">DDB_G0273981</name>
</gene>
<sequence length="79" mass="9076">MGASDKFIGFVMVLFRIFVFGYYTTWVIITPFIVSDHWIQQYFLPREYGIIIPLVLLVVGITAIGTFLGLVMIKSKKNK</sequence>
<evidence type="ECO:0000250" key="1"/>
<evidence type="ECO:0000255" key="2"/>
<evidence type="ECO:0000305" key="3"/>
<comment type="function">
    <text evidence="1">Regulates the biosynthesis of dolichol phosphate-mannose. Regulatory subunit of the dolichol-phosphate mannose (DPM) synthase complex; essential for the ER localization and stable expression of dpm1 (By similarity).</text>
</comment>
<comment type="pathway">
    <text>Protein modification; protein glycosylation.</text>
</comment>
<comment type="subunit">
    <text evidence="1">Component of the dolichol-phosphate mannose (DPM) synthase complex composed of dpm1, dpm2 and dpm3.</text>
</comment>
<comment type="subcellular location">
    <subcellularLocation>
        <location evidence="1">Endoplasmic reticulum membrane</location>
        <topology evidence="1">Multi-pass membrane protein</topology>
    </subcellularLocation>
</comment>
<comment type="similarity">
    <text evidence="3">Belongs to the DPM2 family.</text>
</comment>
<comment type="caution">
    <text evidence="3">The gene for this protein is duplicated in strains AX3 and AX4. These strains contain a duplication of a segment of 750 kb of chromosome 2 compared to the corresponding sequence in strain AX2.</text>
</comment>